<proteinExistence type="inferred from homology"/>
<feature type="chain" id="PRO_0000334637" description="CDC42 small effector protein 1">
    <location>
        <begin position="1"/>
        <end position="79"/>
    </location>
</feature>
<feature type="domain" description="CRIB" evidence="2">
    <location>
        <begin position="30"/>
        <end position="43"/>
    </location>
</feature>
<feature type="region of interest" description="Disordered" evidence="3">
    <location>
        <begin position="41"/>
        <end position="79"/>
    </location>
</feature>
<feature type="compositionally biased region" description="Basic and acidic residues" evidence="3">
    <location>
        <begin position="63"/>
        <end position="72"/>
    </location>
</feature>
<feature type="lipid moiety-binding region" description="S-palmitoyl cysteine" evidence="1">
    <location>
        <position position="10"/>
    </location>
</feature>
<feature type="lipid moiety-binding region" description="S-palmitoyl cysteine" evidence="1">
    <location>
        <position position="11"/>
    </location>
</feature>
<comment type="function">
    <text evidence="1">Probably involved in the organization of the actin cytoskeleton by acting downstream of CDC42, inducing actin filament assembly.</text>
</comment>
<comment type="subcellular location">
    <subcellularLocation>
        <location evidence="1">Cytoplasm</location>
        <location evidence="1">Cytoskeleton</location>
    </subcellularLocation>
    <subcellularLocation>
        <location evidence="1">Cell membrane</location>
        <topology evidence="1">Lipid-anchor</topology>
    </subcellularLocation>
</comment>
<comment type="similarity">
    <text evidence="4">Belongs to the CDC42SE/SPEC family.</text>
</comment>
<protein>
    <recommendedName>
        <fullName>CDC42 small effector protein 1</fullName>
    </recommendedName>
</protein>
<sequence>MSDFWHKLGCCVVEKPQPKKKRKRIDRSMIGEPMNFVHLTHIGSGDMGASDGLPRAGGVQEQMRSKCGRDRQWSNSGVL</sequence>
<name>C42S1_XENTR</name>
<reference key="1">
    <citation type="submission" date="2005-03" db="EMBL/GenBank/DDBJ databases">
        <authorList>
            <consortium name="NIH - Xenopus Gene Collection (XGC) project"/>
        </authorList>
    </citation>
    <scope>NUCLEOTIDE SEQUENCE [LARGE SCALE MRNA]</scope>
</reference>
<evidence type="ECO:0000250" key="1"/>
<evidence type="ECO:0000255" key="2">
    <source>
        <dbReference type="PROSITE-ProRule" id="PRU00057"/>
    </source>
</evidence>
<evidence type="ECO:0000256" key="3">
    <source>
        <dbReference type="SAM" id="MobiDB-lite"/>
    </source>
</evidence>
<evidence type="ECO:0000305" key="4"/>
<accession>Q5BKH3</accession>
<gene>
    <name type="primary">cdc42se1</name>
</gene>
<organism>
    <name type="scientific">Xenopus tropicalis</name>
    <name type="common">Western clawed frog</name>
    <name type="synonym">Silurana tropicalis</name>
    <dbReference type="NCBI Taxonomy" id="8364"/>
    <lineage>
        <taxon>Eukaryota</taxon>
        <taxon>Metazoa</taxon>
        <taxon>Chordata</taxon>
        <taxon>Craniata</taxon>
        <taxon>Vertebrata</taxon>
        <taxon>Euteleostomi</taxon>
        <taxon>Amphibia</taxon>
        <taxon>Batrachia</taxon>
        <taxon>Anura</taxon>
        <taxon>Pipoidea</taxon>
        <taxon>Pipidae</taxon>
        <taxon>Xenopodinae</taxon>
        <taxon>Xenopus</taxon>
        <taxon>Silurana</taxon>
    </lineage>
</organism>
<dbReference type="EMBL" id="BC091074">
    <property type="protein sequence ID" value="AAH91074.1"/>
    <property type="molecule type" value="mRNA"/>
</dbReference>
<dbReference type="RefSeq" id="NP_001025615.1">
    <property type="nucleotide sequence ID" value="NM_001030444.1"/>
</dbReference>
<dbReference type="FunCoup" id="Q5BKH3">
    <property type="interactions" value="101"/>
</dbReference>
<dbReference type="STRING" id="8364.ENSXETP00000004406"/>
<dbReference type="PaxDb" id="8364-ENSXETP00000043439"/>
<dbReference type="DNASU" id="595003"/>
<dbReference type="GeneID" id="595003"/>
<dbReference type="KEGG" id="xtr:595003"/>
<dbReference type="AGR" id="Xenbase:XB-GENE-945193"/>
<dbReference type="CTD" id="56882"/>
<dbReference type="Xenbase" id="XB-GENE-945193">
    <property type="gene designation" value="cdc42se1"/>
</dbReference>
<dbReference type="eggNOG" id="ENOG502S499">
    <property type="taxonomic scope" value="Eukaryota"/>
</dbReference>
<dbReference type="InParanoid" id="Q5BKH3"/>
<dbReference type="OMA" id="DRPWNNS"/>
<dbReference type="OrthoDB" id="5559822at2759"/>
<dbReference type="Proteomes" id="UP000008143">
    <property type="component" value="Chromosome 8"/>
</dbReference>
<dbReference type="GO" id="GO:0005737">
    <property type="term" value="C:cytoplasm"/>
    <property type="evidence" value="ECO:0007669"/>
    <property type="project" value="UniProtKB-KW"/>
</dbReference>
<dbReference type="GO" id="GO:0005856">
    <property type="term" value="C:cytoskeleton"/>
    <property type="evidence" value="ECO:0007669"/>
    <property type="project" value="UniProtKB-SubCell"/>
</dbReference>
<dbReference type="GO" id="GO:0005886">
    <property type="term" value="C:plasma membrane"/>
    <property type="evidence" value="ECO:0007669"/>
    <property type="project" value="UniProtKB-SubCell"/>
</dbReference>
<dbReference type="GO" id="GO:0031267">
    <property type="term" value="F:small GTPase binding"/>
    <property type="evidence" value="ECO:0007669"/>
    <property type="project" value="InterPro"/>
</dbReference>
<dbReference type="GO" id="GO:0008360">
    <property type="term" value="P:regulation of cell shape"/>
    <property type="evidence" value="ECO:0007669"/>
    <property type="project" value="UniProtKB-KW"/>
</dbReference>
<dbReference type="GO" id="GO:0035023">
    <property type="term" value="P:regulation of Rho protein signal transduction"/>
    <property type="evidence" value="ECO:0007669"/>
    <property type="project" value="InterPro"/>
</dbReference>
<dbReference type="FunFam" id="3.90.810.10:FF:000015">
    <property type="entry name" value="CDC42 small effector protein 1"/>
    <property type="match status" value="1"/>
</dbReference>
<dbReference type="Gene3D" id="3.90.810.10">
    <property type="entry name" value="CRIB domain"/>
    <property type="match status" value="1"/>
</dbReference>
<dbReference type="InterPro" id="IPR000095">
    <property type="entry name" value="CRIB_dom"/>
</dbReference>
<dbReference type="InterPro" id="IPR036936">
    <property type="entry name" value="CRIB_dom_sf"/>
</dbReference>
<dbReference type="InterPro" id="IPR039056">
    <property type="entry name" value="SPEC"/>
</dbReference>
<dbReference type="PANTHER" id="PTHR13502:SF3">
    <property type="entry name" value="CDC42 SMALL EFFECTOR PROTEIN 1"/>
    <property type="match status" value="1"/>
</dbReference>
<dbReference type="PANTHER" id="PTHR13502">
    <property type="entry name" value="CDC42 SMALL EFFECTOR PROTEIN HOMOLOG"/>
    <property type="match status" value="1"/>
</dbReference>
<dbReference type="Pfam" id="PF00786">
    <property type="entry name" value="PBD"/>
    <property type="match status" value="1"/>
</dbReference>
<dbReference type="PROSITE" id="PS50108">
    <property type="entry name" value="CRIB"/>
    <property type="match status" value="1"/>
</dbReference>
<keyword id="KW-1003">Cell membrane</keyword>
<keyword id="KW-0133">Cell shape</keyword>
<keyword id="KW-0963">Cytoplasm</keyword>
<keyword id="KW-0206">Cytoskeleton</keyword>
<keyword id="KW-0449">Lipoprotein</keyword>
<keyword id="KW-0472">Membrane</keyword>
<keyword id="KW-0564">Palmitate</keyword>
<keyword id="KW-1185">Reference proteome</keyword>